<reference key="1">
    <citation type="journal article" date="2000" name="Nature">
        <title>Complete genome sequence of Pseudomonas aeruginosa PAO1, an opportunistic pathogen.</title>
        <authorList>
            <person name="Stover C.K."/>
            <person name="Pham X.-Q.T."/>
            <person name="Erwin A.L."/>
            <person name="Mizoguchi S.D."/>
            <person name="Warrener P."/>
            <person name="Hickey M.J."/>
            <person name="Brinkman F.S.L."/>
            <person name="Hufnagle W.O."/>
            <person name="Kowalik D.J."/>
            <person name="Lagrou M."/>
            <person name="Garber R.L."/>
            <person name="Goltry L."/>
            <person name="Tolentino E."/>
            <person name="Westbrock-Wadman S."/>
            <person name="Yuan Y."/>
            <person name="Brody L.L."/>
            <person name="Coulter S.N."/>
            <person name="Folger K.R."/>
            <person name="Kas A."/>
            <person name="Larbig K."/>
            <person name="Lim R.M."/>
            <person name="Smith K.A."/>
            <person name="Spencer D.H."/>
            <person name="Wong G.K.-S."/>
            <person name="Wu Z."/>
            <person name="Paulsen I.T."/>
            <person name="Reizer J."/>
            <person name="Saier M.H. Jr."/>
            <person name="Hancock R.E.W."/>
            <person name="Lory S."/>
            <person name="Olson M.V."/>
        </authorList>
    </citation>
    <scope>NUCLEOTIDE SEQUENCE [LARGE SCALE GENOMIC DNA]</scope>
    <source>
        <strain>ATCC 15692 / DSM 22644 / CIP 104116 / JCM 14847 / LMG 12228 / 1C / PRS 101 / PAO1</strain>
    </source>
</reference>
<gene>
    <name evidence="1" type="primary">hslU</name>
    <name type="ordered locus">PA5054</name>
</gene>
<evidence type="ECO:0000255" key="1">
    <source>
        <dbReference type="HAMAP-Rule" id="MF_00249"/>
    </source>
</evidence>
<feature type="chain" id="PRO_0000160531" description="ATP-dependent protease ATPase subunit HslU">
    <location>
        <begin position="1"/>
        <end position="447"/>
    </location>
</feature>
<feature type="binding site" evidence="1">
    <location>
        <position position="17"/>
    </location>
    <ligand>
        <name>ATP</name>
        <dbReference type="ChEBI" id="CHEBI:30616"/>
    </ligand>
</feature>
<feature type="binding site" evidence="1">
    <location>
        <begin position="59"/>
        <end position="64"/>
    </location>
    <ligand>
        <name>ATP</name>
        <dbReference type="ChEBI" id="CHEBI:30616"/>
    </ligand>
</feature>
<feature type="binding site" evidence="1">
    <location>
        <position position="256"/>
    </location>
    <ligand>
        <name>ATP</name>
        <dbReference type="ChEBI" id="CHEBI:30616"/>
    </ligand>
</feature>
<feature type="binding site" evidence="1">
    <location>
        <position position="321"/>
    </location>
    <ligand>
        <name>ATP</name>
        <dbReference type="ChEBI" id="CHEBI:30616"/>
    </ligand>
</feature>
<feature type="binding site" evidence="1">
    <location>
        <position position="393"/>
    </location>
    <ligand>
        <name>ATP</name>
        <dbReference type="ChEBI" id="CHEBI:30616"/>
    </ligand>
</feature>
<accession>Q9HUC5</accession>
<protein>
    <recommendedName>
        <fullName evidence="1">ATP-dependent protease ATPase subunit HslU</fullName>
    </recommendedName>
    <alternativeName>
        <fullName evidence="1">Unfoldase HslU</fullName>
    </alternativeName>
</protein>
<name>HSLU_PSEAE</name>
<dbReference type="EMBL" id="AE004091">
    <property type="protein sequence ID" value="AAG08439.1"/>
    <property type="molecule type" value="Genomic_DNA"/>
</dbReference>
<dbReference type="PIR" id="E83015">
    <property type="entry name" value="E83015"/>
</dbReference>
<dbReference type="RefSeq" id="NP_253741.1">
    <property type="nucleotide sequence ID" value="NC_002516.2"/>
</dbReference>
<dbReference type="RefSeq" id="WP_003095854.1">
    <property type="nucleotide sequence ID" value="NZ_QZGE01000002.1"/>
</dbReference>
<dbReference type="SMR" id="Q9HUC5"/>
<dbReference type="FunCoup" id="Q9HUC5">
    <property type="interactions" value="297"/>
</dbReference>
<dbReference type="STRING" id="208964.PA5054"/>
<dbReference type="PaxDb" id="208964-PA5054"/>
<dbReference type="GeneID" id="881050"/>
<dbReference type="KEGG" id="pae:PA5054"/>
<dbReference type="PATRIC" id="fig|208964.12.peg.5298"/>
<dbReference type="PseudoCAP" id="PA5054"/>
<dbReference type="HOGENOM" id="CLU_033123_0_0_6"/>
<dbReference type="InParanoid" id="Q9HUC5"/>
<dbReference type="OrthoDB" id="9804062at2"/>
<dbReference type="PhylomeDB" id="Q9HUC5"/>
<dbReference type="BioCyc" id="PAER208964:G1FZ6-5170-MONOMER"/>
<dbReference type="Proteomes" id="UP000002438">
    <property type="component" value="Chromosome"/>
</dbReference>
<dbReference type="GO" id="GO:0009376">
    <property type="term" value="C:HslUV protease complex"/>
    <property type="evidence" value="ECO:0000318"/>
    <property type="project" value="GO_Central"/>
</dbReference>
<dbReference type="GO" id="GO:0005524">
    <property type="term" value="F:ATP binding"/>
    <property type="evidence" value="ECO:0000318"/>
    <property type="project" value="GO_Central"/>
</dbReference>
<dbReference type="GO" id="GO:0016887">
    <property type="term" value="F:ATP hydrolysis activity"/>
    <property type="evidence" value="ECO:0000318"/>
    <property type="project" value="GO_Central"/>
</dbReference>
<dbReference type="GO" id="GO:0008233">
    <property type="term" value="F:peptidase activity"/>
    <property type="evidence" value="ECO:0007669"/>
    <property type="project" value="InterPro"/>
</dbReference>
<dbReference type="GO" id="GO:0036402">
    <property type="term" value="F:proteasome-activating activity"/>
    <property type="evidence" value="ECO:0007669"/>
    <property type="project" value="UniProtKB-UniRule"/>
</dbReference>
<dbReference type="GO" id="GO:0043335">
    <property type="term" value="P:protein unfolding"/>
    <property type="evidence" value="ECO:0007669"/>
    <property type="project" value="UniProtKB-UniRule"/>
</dbReference>
<dbReference type="GO" id="GO:0051603">
    <property type="term" value="P:proteolysis involved in protein catabolic process"/>
    <property type="evidence" value="ECO:0000318"/>
    <property type="project" value="GO_Central"/>
</dbReference>
<dbReference type="CDD" id="cd19498">
    <property type="entry name" value="RecA-like_HslU"/>
    <property type="match status" value="1"/>
</dbReference>
<dbReference type="FunFam" id="1.10.8.10:FF:000028">
    <property type="entry name" value="ATP-dependent protease ATPase subunit HslU"/>
    <property type="match status" value="1"/>
</dbReference>
<dbReference type="FunFam" id="3.40.50.300:FF:000213">
    <property type="entry name" value="ATP-dependent protease ATPase subunit HslU"/>
    <property type="match status" value="1"/>
</dbReference>
<dbReference type="FunFam" id="3.40.50.300:FF:000220">
    <property type="entry name" value="ATP-dependent protease ATPase subunit HslU"/>
    <property type="match status" value="1"/>
</dbReference>
<dbReference type="Gene3D" id="1.10.8.60">
    <property type="match status" value="1"/>
</dbReference>
<dbReference type="Gene3D" id="3.40.50.300">
    <property type="entry name" value="P-loop containing nucleotide triphosphate hydrolases"/>
    <property type="match status" value="2"/>
</dbReference>
<dbReference type="HAMAP" id="MF_00249">
    <property type="entry name" value="HslU"/>
    <property type="match status" value="1"/>
</dbReference>
<dbReference type="InterPro" id="IPR003593">
    <property type="entry name" value="AAA+_ATPase"/>
</dbReference>
<dbReference type="InterPro" id="IPR050052">
    <property type="entry name" value="ATP-dep_Clp_protease_ClpX"/>
</dbReference>
<dbReference type="InterPro" id="IPR003959">
    <property type="entry name" value="ATPase_AAA_core"/>
</dbReference>
<dbReference type="InterPro" id="IPR019489">
    <property type="entry name" value="Clp_ATPase_C"/>
</dbReference>
<dbReference type="InterPro" id="IPR004491">
    <property type="entry name" value="HslU"/>
</dbReference>
<dbReference type="InterPro" id="IPR027417">
    <property type="entry name" value="P-loop_NTPase"/>
</dbReference>
<dbReference type="NCBIfam" id="TIGR00390">
    <property type="entry name" value="hslU"/>
    <property type="match status" value="1"/>
</dbReference>
<dbReference type="NCBIfam" id="NF003544">
    <property type="entry name" value="PRK05201.1"/>
    <property type="match status" value="1"/>
</dbReference>
<dbReference type="PANTHER" id="PTHR48102">
    <property type="entry name" value="ATP-DEPENDENT CLP PROTEASE ATP-BINDING SUBUNIT CLPX-LIKE, MITOCHONDRIAL-RELATED"/>
    <property type="match status" value="1"/>
</dbReference>
<dbReference type="PANTHER" id="PTHR48102:SF3">
    <property type="entry name" value="ATP-DEPENDENT PROTEASE ATPASE SUBUNIT HSLU"/>
    <property type="match status" value="1"/>
</dbReference>
<dbReference type="Pfam" id="PF00004">
    <property type="entry name" value="AAA"/>
    <property type="match status" value="1"/>
</dbReference>
<dbReference type="Pfam" id="PF07724">
    <property type="entry name" value="AAA_2"/>
    <property type="match status" value="1"/>
</dbReference>
<dbReference type="SMART" id="SM00382">
    <property type="entry name" value="AAA"/>
    <property type="match status" value="1"/>
</dbReference>
<dbReference type="SMART" id="SM01086">
    <property type="entry name" value="ClpB_D2-small"/>
    <property type="match status" value="1"/>
</dbReference>
<dbReference type="SUPFAM" id="SSF52540">
    <property type="entry name" value="P-loop containing nucleoside triphosphate hydrolases"/>
    <property type="match status" value="1"/>
</dbReference>
<sequence>MSMTPREIVHELNRHIIGQDDAKRAVAIALRNRWRRMQLPAELRAEVTPKNILMIGPTGVGKTEIARRLARLANAPFIKVEATKFTEVGYVGRDVESIIRDLADAAVKMLREQEIQKVKYRAEDAAEERILDALLPAARPAMGFGDEPAREDSNTRQLFRKRLREGQLDDKEIDIEVADNPAGVEIMAPPGMEEMTNQLQNLFSGMSKGKKKTRKLKVAEALKLIRDEEAVRLVNEEELKARALEAVEQHGIVFIDEIDKIAKRANAGGADVSREGVQRDLLPLIEGCTVNTKLGMVKTDHILFIASGAFHLSKPSDLVPELQGRLPIRVELKALSPNDFERILTEPHASLTEQYRELLKTEGLAIEFAEDGIKRLAEIAWQVNEKTENIGARRLHTLLERLLEEVSFSAADLASEHSDKPILIDAGYVNSHLGELAEDEDLSRYIL</sequence>
<organism>
    <name type="scientific">Pseudomonas aeruginosa (strain ATCC 15692 / DSM 22644 / CIP 104116 / JCM 14847 / LMG 12228 / 1C / PRS 101 / PAO1)</name>
    <dbReference type="NCBI Taxonomy" id="208964"/>
    <lineage>
        <taxon>Bacteria</taxon>
        <taxon>Pseudomonadati</taxon>
        <taxon>Pseudomonadota</taxon>
        <taxon>Gammaproteobacteria</taxon>
        <taxon>Pseudomonadales</taxon>
        <taxon>Pseudomonadaceae</taxon>
        <taxon>Pseudomonas</taxon>
    </lineage>
</organism>
<proteinExistence type="inferred from homology"/>
<comment type="function">
    <text evidence="1">ATPase subunit of a proteasome-like degradation complex; this subunit has chaperone activity. The binding of ATP and its subsequent hydrolysis by HslU are essential for unfolding of protein substrates subsequently hydrolyzed by HslV. HslU recognizes the N-terminal part of its protein substrates and unfolds these before they are guided to HslV for hydrolysis.</text>
</comment>
<comment type="subunit">
    <text evidence="1">A double ring-shaped homohexamer of HslV is capped on each side by a ring-shaped HslU homohexamer. The assembly of the HslU/HslV complex is dependent on binding of ATP.</text>
</comment>
<comment type="subcellular location">
    <subcellularLocation>
        <location evidence="1">Cytoplasm</location>
    </subcellularLocation>
</comment>
<comment type="similarity">
    <text evidence="1">Belongs to the ClpX chaperone family. HslU subfamily.</text>
</comment>
<keyword id="KW-0067">ATP-binding</keyword>
<keyword id="KW-0143">Chaperone</keyword>
<keyword id="KW-0963">Cytoplasm</keyword>
<keyword id="KW-0547">Nucleotide-binding</keyword>
<keyword id="KW-1185">Reference proteome</keyword>